<reference key="1">
    <citation type="journal article" date="2005" name="Science">
        <title>The transcriptional landscape of the mammalian genome.</title>
        <authorList>
            <person name="Carninci P."/>
            <person name="Kasukawa T."/>
            <person name="Katayama S."/>
            <person name="Gough J."/>
            <person name="Frith M.C."/>
            <person name="Maeda N."/>
            <person name="Oyama R."/>
            <person name="Ravasi T."/>
            <person name="Lenhard B."/>
            <person name="Wells C."/>
            <person name="Kodzius R."/>
            <person name="Shimokawa K."/>
            <person name="Bajic V.B."/>
            <person name="Brenner S.E."/>
            <person name="Batalov S."/>
            <person name="Forrest A.R."/>
            <person name="Zavolan M."/>
            <person name="Davis M.J."/>
            <person name="Wilming L.G."/>
            <person name="Aidinis V."/>
            <person name="Allen J.E."/>
            <person name="Ambesi-Impiombato A."/>
            <person name="Apweiler R."/>
            <person name="Aturaliya R.N."/>
            <person name="Bailey T.L."/>
            <person name="Bansal M."/>
            <person name="Baxter L."/>
            <person name="Beisel K.W."/>
            <person name="Bersano T."/>
            <person name="Bono H."/>
            <person name="Chalk A.M."/>
            <person name="Chiu K.P."/>
            <person name="Choudhary V."/>
            <person name="Christoffels A."/>
            <person name="Clutterbuck D.R."/>
            <person name="Crowe M.L."/>
            <person name="Dalla E."/>
            <person name="Dalrymple B.P."/>
            <person name="de Bono B."/>
            <person name="Della Gatta G."/>
            <person name="di Bernardo D."/>
            <person name="Down T."/>
            <person name="Engstrom P."/>
            <person name="Fagiolini M."/>
            <person name="Faulkner G."/>
            <person name="Fletcher C.F."/>
            <person name="Fukushima T."/>
            <person name="Furuno M."/>
            <person name="Futaki S."/>
            <person name="Gariboldi M."/>
            <person name="Georgii-Hemming P."/>
            <person name="Gingeras T.R."/>
            <person name="Gojobori T."/>
            <person name="Green R.E."/>
            <person name="Gustincich S."/>
            <person name="Harbers M."/>
            <person name="Hayashi Y."/>
            <person name="Hensch T.K."/>
            <person name="Hirokawa N."/>
            <person name="Hill D."/>
            <person name="Huminiecki L."/>
            <person name="Iacono M."/>
            <person name="Ikeo K."/>
            <person name="Iwama A."/>
            <person name="Ishikawa T."/>
            <person name="Jakt M."/>
            <person name="Kanapin A."/>
            <person name="Katoh M."/>
            <person name="Kawasawa Y."/>
            <person name="Kelso J."/>
            <person name="Kitamura H."/>
            <person name="Kitano H."/>
            <person name="Kollias G."/>
            <person name="Krishnan S.P."/>
            <person name="Kruger A."/>
            <person name="Kummerfeld S.K."/>
            <person name="Kurochkin I.V."/>
            <person name="Lareau L.F."/>
            <person name="Lazarevic D."/>
            <person name="Lipovich L."/>
            <person name="Liu J."/>
            <person name="Liuni S."/>
            <person name="McWilliam S."/>
            <person name="Madan Babu M."/>
            <person name="Madera M."/>
            <person name="Marchionni L."/>
            <person name="Matsuda H."/>
            <person name="Matsuzawa S."/>
            <person name="Miki H."/>
            <person name="Mignone F."/>
            <person name="Miyake S."/>
            <person name="Morris K."/>
            <person name="Mottagui-Tabar S."/>
            <person name="Mulder N."/>
            <person name="Nakano N."/>
            <person name="Nakauchi H."/>
            <person name="Ng P."/>
            <person name="Nilsson R."/>
            <person name="Nishiguchi S."/>
            <person name="Nishikawa S."/>
            <person name="Nori F."/>
            <person name="Ohara O."/>
            <person name="Okazaki Y."/>
            <person name="Orlando V."/>
            <person name="Pang K.C."/>
            <person name="Pavan W.J."/>
            <person name="Pavesi G."/>
            <person name="Pesole G."/>
            <person name="Petrovsky N."/>
            <person name="Piazza S."/>
            <person name="Reed J."/>
            <person name="Reid J.F."/>
            <person name="Ring B.Z."/>
            <person name="Ringwald M."/>
            <person name="Rost B."/>
            <person name="Ruan Y."/>
            <person name="Salzberg S.L."/>
            <person name="Sandelin A."/>
            <person name="Schneider C."/>
            <person name="Schoenbach C."/>
            <person name="Sekiguchi K."/>
            <person name="Semple C.A."/>
            <person name="Seno S."/>
            <person name="Sessa L."/>
            <person name="Sheng Y."/>
            <person name="Shibata Y."/>
            <person name="Shimada H."/>
            <person name="Shimada K."/>
            <person name="Silva D."/>
            <person name="Sinclair B."/>
            <person name="Sperling S."/>
            <person name="Stupka E."/>
            <person name="Sugiura K."/>
            <person name="Sultana R."/>
            <person name="Takenaka Y."/>
            <person name="Taki K."/>
            <person name="Tammoja K."/>
            <person name="Tan S.L."/>
            <person name="Tang S."/>
            <person name="Taylor M.S."/>
            <person name="Tegner J."/>
            <person name="Teichmann S.A."/>
            <person name="Ueda H.R."/>
            <person name="van Nimwegen E."/>
            <person name="Verardo R."/>
            <person name="Wei C.L."/>
            <person name="Yagi K."/>
            <person name="Yamanishi H."/>
            <person name="Zabarovsky E."/>
            <person name="Zhu S."/>
            <person name="Zimmer A."/>
            <person name="Hide W."/>
            <person name="Bult C."/>
            <person name="Grimmond S.M."/>
            <person name="Teasdale R.D."/>
            <person name="Liu E.T."/>
            <person name="Brusic V."/>
            <person name="Quackenbush J."/>
            <person name="Wahlestedt C."/>
            <person name="Mattick J.S."/>
            <person name="Hume D.A."/>
            <person name="Kai C."/>
            <person name="Sasaki D."/>
            <person name="Tomaru Y."/>
            <person name="Fukuda S."/>
            <person name="Kanamori-Katayama M."/>
            <person name="Suzuki M."/>
            <person name="Aoki J."/>
            <person name="Arakawa T."/>
            <person name="Iida J."/>
            <person name="Imamura K."/>
            <person name="Itoh M."/>
            <person name="Kato T."/>
            <person name="Kawaji H."/>
            <person name="Kawagashira N."/>
            <person name="Kawashima T."/>
            <person name="Kojima M."/>
            <person name="Kondo S."/>
            <person name="Konno H."/>
            <person name="Nakano K."/>
            <person name="Ninomiya N."/>
            <person name="Nishio T."/>
            <person name="Okada M."/>
            <person name="Plessy C."/>
            <person name="Shibata K."/>
            <person name="Shiraki T."/>
            <person name="Suzuki S."/>
            <person name="Tagami M."/>
            <person name="Waki K."/>
            <person name="Watahiki A."/>
            <person name="Okamura-Oho Y."/>
            <person name="Suzuki H."/>
            <person name="Kawai J."/>
            <person name="Hayashizaki Y."/>
        </authorList>
    </citation>
    <scope>NUCLEOTIDE SEQUENCE [LARGE SCALE MRNA]</scope>
    <source>
        <strain>C57BL/6J</strain>
        <tissue>Embryo</tissue>
    </source>
</reference>
<reference key="2">
    <citation type="journal article" date="2010" name="Cell">
        <title>A tissue-specific atlas of mouse protein phosphorylation and expression.</title>
        <authorList>
            <person name="Huttlin E.L."/>
            <person name="Jedrychowski M.P."/>
            <person name="Elias J.E."/>
            <person name="Goswami T."/>
            <person name="Rad R."/>
            <person name="Beausoleil S.A."/>
            <person name="Villen J."/>
            <person name="Haas W."/>
            <person name="Sowa M.E."/>
            <person name="Gygi S.P."/>
        </authorList>
    </citation>
    <scope>IDENTIFICATION BY MASS SPECTROMETRY [LARGE SCALE ANALYSIS]</scope>
    <source>
        <tissue>Brain</tissue>
        <tissue>Heart</tissue>
        <tissue>Kidney</tissue>
        <tissue>Liver</tissue>
        <tissue>Spleen</tissue>
        <tissue>Testis</tissue>
    </source>
</reference>
<sequence length="602" mass="68076">MSRHMRAPRFDPRAGFHAEGKDRGPSVPQGLLKAARSSGQLNLAGRNLGEVPQCVWRINVDIPEEANQNLSFSSTERWWDQTDLTKLIISSNKLQSLSDDLRLLPALTVLDIHDNQLTSLPSAIRELDNLQKLNVSHNKLKILPEEITSLKNLRTLHLQHNELTCIPEGFEHLSCLEDLDLSSNRLATVPADFALLSSLLRLNLSSNQLKNLPAEISRMKRLKHLDCDANLLETVPPDVGSMESLELLYLRRNKLRVLPEFPSCRQLKELHLAENQIEKLGAEHLQHLQAILVLDLRGNKLRSVPEEMALLQSLERLDLSNNDISSLPCSLGNLHLKFLALEGNPLRTIRREIIAKGTQEVLKYLRSKIKDDRTNQNDSVPETAMTLPSEARVNIHAIATLKLLDYSDKQATLIPDDLFDATKTTLITSINFSKNQLCEIPQRIVELKEMVLDINLSFNKLSFISHELCLLQKLTFLDLRNNFLSSLPEEMSSLTKLQTINLSFNRFKVFPEVLYRISTLEAVLISNNQVGSVDPQKMKLMENLNTLDLQNNDLLQIPPELGNCVQLRTLLLDGNPFRVPRAAILMKGTAAVLEYLRDRIPA</sequence>
<feature type="chain" id="PRO_0000226259" description="Leucine-rich repeat-containing protein 40">
    <location>
        <begin position="1"/>
        <end position="602"/>
    </location>
</feature>
<feature type="repeat" description="LRR 1">
    <location>
        <begin position="35"/>
        <end position="58"/>
    </location>
</feature>
<feature type="repeat" description="LRR 2">
    <location>
        <begin position="81"/>
        <end position="103"/>
    </location>
</feature>
<feature type="repeat" description="LRR 3">
    <location>
        <begin position="104"/>
        <end position="126"/>
    </location>
</feature>
<feature type="repeat" description="LRR 4">
    <location>
        <begin position="127"/>
        <end position="149"/>
    </location>
</feature>
<feature type="repeat" description="LRR 5">
    <location>
        <begin position="150"/>
        <end position="172"/>
    </location>
</feature>
<feature type="repeat" description="LRR 6">
    <location>
        <begin position="174"/>
        <end position="195"/>
    </location>
</feature>
<feature type="repeat" description="LRR 7">
    <location>
        <begin position="196"/>
        <end position="219"/>
    </location>
</feature>
<feature type="repeat" description="LRR 8">
    <location>
        <begin position="221"/>
        <end position="241"/>
    </location>
</feature>
<feature type="repeat" description="LRR 9">
    <location>
        <begin position="242"/>
        <end position="266"/>
    </location>
</feature>
<feature type="repeat" description="LRR 10">
    <location>
        <begin position="268"/>
        <end position="287"/>
    </location>
</feature>
<feature type="repeat" description="LRR 11">
    <location>
        <begin position="288"/>
        <end position="310"/>
    </location>
</feature>
<feature type="repeat" description="LRR 12">
    <location>
        <begin position="311"/>
        <end position="334"/>
    </location>
</feature>
<feature type="repeat" description="LRR 13">
    <location>
        <begin position="336"/>
        <end position="356"/>
    </location>
</feature>
<feature type="repeat" description="LRR 14">
    <location>
        <begin position="398"/>
        <end position="421"/>
    </location>
</feature>
<feature type="repeat" description="LRR 15">
    <location>
        <begin position="424"/>
        <end position="447"/>
    </location>
</feature>
<feature type="repeat" description="LRR 16">
    <location>
        <begin position="449"/>
        <end position="470"/>
    </location>
</feature>
<feature type="repeat" description="LRR 17">
    <location>
        <begin position="471"/>
        <end position="494"/>
    </location>
</feature>
<feature type="repeat" description="LRR 18">
    <location>
        <begin position="496"/>
        <end position="517"/>
    </location>
</feature>
<feature type="repeat" description="LRR 19">
    <location>
        <begin position="519"/>
        <end position="540"/>
    </location>
</feature>
<feature type="repeat" description="LRR 20">
    <location>
        <begin position="541"/>
        <end position="564"/>
    </location>
</feature>
<feature type="repeat" description="LRR 21">
    <location>
        <begin position="566"/>
        <end position="587"/>
    </location>
</feature>
<feature type="region of interest" description="Disordered" evidence="2">
    <location>
        <begin position="1"/>
        <end position="26"/>
    </location>
</feature>
<feature type="compositionally biased region" description="Basic and acidic residues" evidence="2">
    <location>
        <begin position="8"/>
        <end position="24"/>
    </location>
</feature>
<feature type="modified residue" description="Phosphoserine" evidence="1">
    <location>
        <position position="71"/>
    </location>
</feature>
<feature type="sequence conflict" description="In Ref. 1; BAC28900/BAE37277." evidence="3" ref="1">
    <original>HM</original>
    <variation>QL</variation>
    <location>
        <begin position="4"/>
        <end position="5"/>
    </location>
</feature>
<feature type="sequence conflict" description="In Ref. 1; BAB27802." evidence="3" ref="1">
    <original>M</original>
    <variation>L</variation>
    <location>
        <position position="5"/>
    </location>
</feature>
<accession>Q9CRC8</accession>
<accession>Q78WQ9</accession>
<accession>Q8BS83</accession>
<protein>
    <recommendedName>
        <fullName>Leucine-rich repeat-containing protein 40</fullName>
    </recommendedName>
</protein>
<keyword id="KW-0433">Leucine-rich repeat</keyword>
<keyword id="KW-0597">Phosphoprotein</keyword>
<keyword id="KW-1185">Reference proteome</keyword>
<keyword id="KW-0677">Repeat</keyword>
<dbReference type="EMBL" id="AK011726">
    <property type="protein sequence ID" value="BAB27802.2"/>
    <property type="molecule type" value="mRNA"/>
</dbReference>
<dbReference type="EMBL" id="AK017814">
    <property type="protein sequence ID" value="BAB30951.2"/>
    <property type="molecule type" value="mRNA"/>
</dbReference>
<dbReference type="EMBL" id="AK034978">
    <property type="protein sequence ID" value="BAC28900.1"/>
    <property type="molecule type" value="mRNA"/>
</dbReference>
<dbReference type="EMBL" id="AK163288">
    <property type="protein sequence ID" value="BAE37277.1"/>
    <property type="molecule type" value="mRNA"/>
</dbReference>
<dbReference type="CCDS" id="CCDS17935.1"/>
<dbReference type="RefSeq" id="NP_001276453.1">
    <property type="nucleotide sequence ID" value="NM_001289524.1"/>
</dbReference>
<dbReference type="RefSeq" id="NP_077156.2">
    <property type="nucleotide sequence ID" value="NM_024194.6"/>
</dbReference>
<dbReference type="SMR" id="Q9CRC8"/>
<dbReference type="BioGRID" id="211974">
    <property type="interactions" value="9"/>
</dbReference>
<dbReference type="FunCoup" id="Q9CRC8">
    <property type="interactions" value="2846"/>
</dbReference>
<dbReference type="STRING" id="10090.ENSMUSP00000071956"/>
<dbReference type="GlyGen" id="Q9CRC8">
    <property type="glycosylation" value="3 sites, 2 N-linked glycans (2 sites), 1 O-linked glycan (1 site)"/>
</dbReference>
<dbReference type="iPTMnet" id="Q9CRC8"/>
<dbReference type="PhosphoSitePlus" id="Q9CRC8"/>
<dbReference type="PaxDb" id="10090-ENSMUSP00000071956"/>
<dbReference type="PeptideAtlas" id="Q9CRC8"/>
<dbReference type="ProteomicsDB" id="252669"/>
<dbReference type="Pumba" id="Q9CRC8"/>
<dbReference type="DNASU" id="67144"/>
<dbReference type="GeneID" id="67144"/>
<dbReference type="KEGG" id="mmu:67144"/>
<dbReference type="UCSC" id="uc008rvu.2">
    <property type="organism name" value="mouse"/>
</dbReference>
<dbReference type="AGR" id="MGI:1914394"/>
<dbReference type="CTD" id="55631"/>
<dbReference type="MGI" id="MGI:1914394">
    <property type="gene designation" value="Lrrc40"/>
</dbReference>
<dbReference type="eggNOG" id="KOG0472">
    <property type="taxonomic scope" value="Eukaryota"/>
</dbReference>
<dbReference type="InParanoid" id="Q9CRC8"/>
<dbReference type="OrthoDB" id="660555at2759"/>
<dbReference type="PhylomeDB" id="Q9CRC8"/>
<dbReference type="TreeFam" id="TF354310"/>
<dbReference type="BioGRID-ORCS" id="67144">
    <property type="hits" value="2 hits in 77 CRISPR screens"/>
</dbReference>
<dbReference type="ChiTaRS" id="Lrrc40">
    <property type="organism name" value="mouse"/>
</dbReference>
<dbReference type="PRO" id="PR:Q9CRC8"/>
<dbReference type="Proteomes" id="UP000000589">
    <property type="component" value="Unplaced"/>
</dbReference>
<dbReference type="RNAct" id="Q9CRC8">
    <property type="molecule type" value="protein"/>
</dbReference>
<dbReference type="FunFam" id="3.80.10.10:FF:000116">
    <property type="entry name" value="Leucine-rich repeat-containing protein 40"/>
    <property type="match status" value="1"/>
</dbReference>
<dbReference type="FunFam" id="3.80.10.10:FF:000193">
    <property type="entry name" value="Leucine-rich repeat-containing protein 40"/>
    <property type="match status" value="1"/>
</dbReference>
<dbReference type="FunFam" id="3.80.10.10:FF:000265">
    <property type="entry name" value="Leucine-rich repeat-containing protein 40"/>
    <property type="match status" value="1"/>
</dbReference>
<dbReference type="FunFam" id="3.80.10.10:FF:000206">
    <property type="entry name" value="leucine-rich repeat-containing protein 40"/>
    <property type="match status" value="1"/>
</dbReference>
<dbReference type="Gene3D" id="3.80.10.10">
    <property type="entry name" value="Ribonuclease Inhibitor"/>
    <property type="match status" value="5"/>
</dbReference>
<dbReference type="InterPro" id="IPR001611">
    <property type="entry name" value="Leu-rich_rpt"/>
</dbReference>
<dbReference type="InterPro" id="IPR003591">
    <property type="entry name" value="Leu-rich_rpt_typical-subtyp"/>
</dbReference>
<dbReference type="InterPro" id="IPR032675">
    <property type="entry name" value="LRR_dom_sf"/>
</dbReference>
<dbReference type="InterPro" id="IPR050216">
    <property type="entry name" value="LRR_domain-containing"/>
</dbReference>
<dbReference type="InterPro" id="IPR055414">
    <property type="entry name" value="LRR_R13L4/SHOC2-like"/>
</dbReference>
<dbReference type="PANTHER" id="PTHR48051">
    <property type="match status" value="1"/>
</dbReference>
<dbReference type="PANTHER" id="PTHR48051:SF1">
    <property type="entry name" value="RAS SUPPRESSOR PROTEIN 1"/>
    <property type="match status" value="1"/>
</dbReference>
<dbReference type="Pfam" id="PF00560">
    <property type="entry name" value="LRR_1"/>
    <property type="match status" value="1"/>
</dbReference>
<dbReference type="Pfam" id="PF23598">
    <property type="entry name" value="LRR_14"/>
    <property type="match status" value="1"/>
</dbReference>
<dbReference type="Pfam" id="PF13855">
    <property type="entry name" value="LRR_8"/>
    <property type="match status" value="2"/>
</dbReference>
<dbReference type="PRINTS" id="PR00019">
    <property type="entry name" value="LEURICHRPT"/>
</dbReference>
<dbReference type="SMART" id="SM00364">
    <property type="entry name" value="LRR_BAC"/>
    <property type="match status" value="11"/>
</dbReference>
<dbReference type="SMART" id="SM00365">
    <property type="entry name" value="LRR_SD22"/>
    <property type="match status" value="6"/>
</dbReference>
<dbReference type="SMART" id="SM00369">
    <property type="entry name" value="LRR_TYP"/>
    <property type="match status" value="13"/>
</dbReference>
<dbReference type="SUPFAM" id="SSF52058">
    <property type="entry name" value="L domain-like"/>
    <property type="match status" value="2"/>
</dbReference>
<dbReference type="PROSITE" id="PS51450">
    <property type="entry name" value="LRR"/>
    <property type="match status" value="16"/>
</dbReference>
<gene>
    <name type="primary">Lrrc40</name>
</gene>
<name>LRC40_MOUSE</name>
<proteinExistence type="evidence at protein level"/>
<evidence type="ECO:0000250" key="1">
    <source>
        <dbReference type="UniProtKB" id="Q9H9A6"/>
    </source>
</evidence>
<evidence type="ECO:0000256" key="2">
    <source>
        <dbReference type="SAM" id="MobiDB-lite"/>
    </source>
</evidence>
<evidence type="ECO:0000305" key="3"/>
<organism>
    <name type="scientific">Mus musculus</name>
    <name type="common">Mouse</name>
    <dbReference type="NCBI Taxonomy" id="10090"/>
    <lineage>
        <taxon>Eukaryota</taxon>
        <taxon>Metazoa</taxon>
        <taxon>Chordata</taxon>
        <taxon>Craniata</taxon>
        <taxon>Vertebrata</taxon>
        <taxon>Euteleostomi</taxon>
        <taxon>Mammalia</taxon>
        <taxon>Eutheria</taxon>
        <taxon>Euarchontoglires</taxon>
        <taxon>Glires</taxon>
        <taxon>Rodentia</taxon>
        <taxon>Myomorpha</taxon>
        <taxon>Muroidea</taxon>
        <taxon>Muridae</taxon>
        <taxon>Murinae</taxon>
        <taxon>Mus</taxon>
        <taxon>Mus</taxon>
    </lineage>
</organism>